<reference key="1">
    <citation type="journal article" date="1990" name="J. Biol. Chem.">
        <title>Cloning, sequencing, and expression of the gene encoding the porcine alpha 2-adrenergic receptor. Allosteric modulation by Na+, H+, and amiloride analogs.</title>
        <authorList>
            <person name="Guyer C.A."/>
            <person name="Horstman D.A."/>
            <person name="Wilson A.L."/>
            <person name="Clark J.D."/>
            <person name="Kragoe E.J. Jr."/>
            <person name="Limbird L.E."/>
        </authorList>
    </citation>
    <scope>NUCLEOTIDE SEQUENCE [GENOMIC DNA]</scope>
    <scope>PROTEIN SEQUENCE OF 227-247</scope>
    <source>
        <tissue>Liver</tissue>
    </source>
</reference>
<reference key="2">
    <citation type="journal article" date="1993" name="J. Biol. Chem.">
        <title>Mutations of the alpha 2A-adrenergic receptor that eliminate detectable palmitoylation do not perturb receptor-G-protein coupling.</title>
        <authorList>
            <person name="Kennedy M.E."/>
            <person name="Limbird L.E."/>
        </authorList>
    </citation>
    <scope>PALMITOYLATION AT CYS-457</scope>
    <scope>MUTAGENESIS OF CYS-457</scope>
</reference>
<name>ADA2A_PIG</name>
<gene>
    <name evidence="2" type="primary">ADRA2A</name>
    <name type="synonym">A2AR</name>
</gene>
<comment type="function">
    <text>Alpha-2 adrenergic receptors mediate the catecholamine-induced inhibition of adenylate cyclase through the action of G proteins.</text>
</comment>
<comment type="subcellular location">
    <subcellularLocation>
        <location>Cell membrane</location>
        <topology>Multi-pass membrane protein</topology>
    </subcellularLocation>
</comment>
<comment type="miscellaneous">
    <text>Alpha2-adrenergic receptor shows an allosteric modulation by Na(+), H(+) and amiloride analogs.</text>
</comment>
<comment type="similarity">
    <text evidence="6">Belongs to the G-protein coupled receptor 1 family. Adrenergic receptor subfamily. ADRA2A sub-subfamily.</text>
</comment>
<comment type="caution">
    <text evidence="9">It is uncertain whether Met-1 or Met-16 is the initiator.</text>
</comment>
<comment type="sequence caution" evidence="9">
    <conflict type="erroneous initiation">
        <sequence resource="EMBL-CDS" id="AAA30984"/>
    </conflict>
    <text>Truncated N-terminus.</text>
</comment>
<proteinExistence type="evidence at protein level"/>
<keyword id="KW-1003">Cell membrane</keyword>
<keyword id="KW-0903">Direct protein sequencing</keyword>
<keyword id="KW-1015">Disulfide bond</keyword>
<keyword id="KW-0297">G-protein coupled receptor</keyword>
<keyword id="KW-0325">Glycoprotein</keyword>
<keyword id="KW-0449">Lipoprotein</keyword>
<keyword id="KW-0472">Membrane</keyword>
<keyword id="KW-0488">Methylation</keyword>
<keyword id="KW-0564">Palmitate</keyword>
<keyword id="KW-0597">Phosphoprotein</keyword>
<keyword id="KW-0675">Receptor</keyword>
<keyword id="KW-1185">Reference proteome</keyword>
<keyword id="KW-0807">Transducer</keyword>
<keyword id="KW-0812">Transmembrane</keyword>
<keyword id="KW-1133">Transmembrane helix</keyword>
<organism>
    <name type="scientific">Sus scrofa</name>
    <name type="common">Pig</name>
    <dbReference type="NCBI Taxonomy" id="9823"/>
    <lineage>
        <taxon>Eukaryota</taxon>
        <taxon>Metazoa</taxon>
        <taxon>Chordata</taxon>
        <taxon>Craniata</taxon>
        <taxon>Vertebrata</taxon>
        <taxon>Euteleostomi</taxon>
        <taxon>Mammalia</taxon>
        <taxon>Eutheria</taxon>
        <taxon>Laurasiatheria</taxon>
        <taxon>Artiodactyla</taxon>
        <taxon>Suina</taxon>
        <taxon>Suidae</taxon>
        <taxon>Sus</taxon>
    </lineage>
</organism>
<protein>
    <recommendedName>
        <fullName evidence="2">Alpha-2A adrenergic receptor</fullName>
    </recommendedName>
    <alternativeName>
        <fullName>Alpha-2A adrenoreceptor</fullName>
        <shortName>Alpha-2A adrenoceptor</shortName>
        <shortName>Alpha-2AAR</shortName>
    </alternativeName>
</protein>
<evidence type="ECO:0000250" key="1"/>
<evidence type="ECO:0000250" key="2">
    <source>
        <dbReference type="UniProtKB" id="P08913"/>
    </source>
</evidence>
<evidence type="ECO:0000250" key="3">
    <source>
        <dbReference type="UniProtKB" id="P22909"/>
    </source>
</evidence>
<evidence type="ECO:0000250" key="4">
    <source>
        <dbReference type="UniProtKB" id="Q01338"/>
    </source>
</evidence>
<evidence type="ECO:0000255" key="5"/>
<evidence type="ECO:0000255" key="6">
    <source>
        <dbReference type="PROSITE-ProRule" id="PRU00521"/>
    </source>
</evidence>
<evidence type="ECO:0000256" key="7">
    <source>
        <dbReference type="SAM" id="MobiDB-lite"/>
    </source>
</evidence>
<evidence type="ECO:0000269" key="8">
    <source>
    </source>
</evidence>
<evidence type="ECO:0000305" key="9"/>
<accession>P18871</accession>
<dbReference type="EMBL" id="J05652">
    <property type="protein sequence ID" value="AAA30984.1"/>
    <property type="status" value="ALT_INIT"/>
    <property type="molecule type" value="Genomic_DNA"/>
</dbReference>
<dbReference type="PIR" id="A38316">
    <property type="entry name" value="A38316"/>
</dbReference>
<dbReference type="RefSeq" id="NP_999565.1">
    <property type="nucleotide sequence ID" value="NM_214400.1"/>
</dbReference>
<dbReference type="BMRB" id="P18871"/>
<dbReference type="SMR" id="P18871"/>
<dbReference type="FunCoup" id="P18871">
    <property type="interactions" value="273"/>
</dbReference>
<dbReference type="STRING" id="9823.ENSSSCP00000011323"/>
<dbReference type="BindingDB" id="P18871"/>
<dbReference type="ChEMBL" id="CHEMBL2350"/>
<dbReference type="DrugCentral" id="P18871"/>
<dbReference type="GlyCosmos" id="P18871">
    <property type="glycosylation" value="2 sites, No reported glycans"/>
</dbReference>
<dbReference type="GlyGen" id="P18871">
    <property type="glycosylation" value="2 sites"/>
</dbReference>
<dbReference type="SwissPalm" id="P18871"/>
<dbReference type="PaxDb" id="9823-ENSSSCP00000011323"/>
<dbReference type="Ensembl" id="ENSSSCT00000011625.3">
    <property type="protein sequence ID" value="ENSSSCP00000011323.3"/>
    <property type="gene ID" value="ENSSSCG00000010629.3"/>
</dbReference>
<dbReference type="Ensembl" id="ENSSSCT00015028889.1">
    <property type="protein sequence ID" value="ENSSSCP00015011354.1"/>
    <property type="gene ID" value="ENSSSCG00015021867.1"/>
</dbReference>
<dbReference type="Ensembl" id="ENSSSCT00025092632.1">
    <property type="protein sequence ID" value="ENSSSCP00025040649.1"/>
    <property type="gene ID" value="ENSSSCG00025067450.1"/>
</dbReference>
<dbReference type="Ensembl" id="ENSSSCT00030075296.1">
    <property type="protein sequence ID" value="ENSSSCP00030034415.1"/>
    <property type="gene ID" value="ENSSSCG00030054037.1"/>
</dbReference>
<dbReference type="Ensembl" id="ENSSSCT00035084472.1">
    <property type="protein sequence ID" value="ENSSSCP00035035142.1"/>
    <property type="gene ID" value="ENSSSCG00035062837.1"/>
</dbReference>
<dbReference type="Ensembl" id="ENSSSCT00040016783.1">
    <property type="protein sequence ID" value="ENSSSCP00040006763.1"/>
    <property type="gene ID" value="ENSSSCG00040012693.1"/>
</dbReference>
<dbReference type="Ensembl" id="ENSSSCT00045040543.1">
    <property type="protein sequence ID" value="ENSSSCP00045028217.1"/>
    <property type="gene ID" value="ENSSSCG00045023737.1"/>
</dbReference>
<dbReference type="Ensembl" id="ENSSSCT00050057601.1">
    <property type="protein sequence ID" value="ENSSSCP00050024621.1"/>
    <property type="gene ID" value="ENSSSCG00050042390.1"/>
</dbReference>
<dbReference type="Ensembl" id="ENSSSCT00055021131.1">
    <property type="protein sequence ID" value="ENSSSCP00055016718.1"/>
    <property type="gene ID" value="ENSSSCG00055010776.1"/>
</dbReference>
<dbReference type="Ensembl" id="ENSSSCT00060016376.1">
    <property type="protein sequence ID" value="ENSSSCP00060006468.1"/>
    <property type="gene ID" value="ENSSSCG00060012491.1"/>
</dbReference>
<dbReference type="Ensembl" id="ENSSSCT00065018548.1">
    <property type="protein sequence ID" value="ENSSSCP00065007578.1"/>
    <property type="gene ID" value="ENSSSCG00065013945.1"/>
</dbReference>
<dbReference type="Ensembl" id="ENSSSCT00070016176.1">
    <property type="protein sequence ID" value="ENSSSCP00070013391.1"/>
    <property type="gene ID" value="ENSSSCG00070008384.1"/>
</dbReference>
<dbReference type="Ensembl" id="ENSSSCT00085007810">
    <property type="protein sequence ID" value="ENSSSCP00085005594"/>
    <property type="gene ID" value="ENSSSCG00085004242"/>
</dbReference>
<dbReference type="Ensembl" id="ENSSSCT00090053672">
    <property type="protein sequence ID" value="ENSSSCP00090033434"/>
    <property type="gene ID" value="ENSSSCG00090030334"/>
</dbReference>
<dbReference type="Ensembl" id="ENSSSCT00105064482">
    <property type="protein sequence ID" value="ENSSSCP00105045886"/>
    <property type="gene ID" value="ENSSSCG00105033823"/>
</dbReference>
<dbReference type="Ensembl" id="ENSSSCT00110037311">
    <property type="protein sequence ID" value="ENSSSCP00110025668"/>
    <property type="gene ID" value="ENSSSCG00110019462"/>
</dbReference>
<dbReference type="Ensembl" id="ENSSSCT00115009330">
    <property type="protein sequence ID" value="ENSSSCP00115008768"/>
    <property type="gene ID" value="ENSSSCG00115005410"/>
</dbReference>
<dbReference type="Ensembl" id="ENSSSCT00130032933">
    <property type="protein sequence ID" value="ENSSSCP00130022683"/>
    <property type="gene ID" value="ENSSSCG00130016763"/>
</dbReference>
<dbReference type="GeneID" id="399501"/>
<dbReference type="KEGG" id="ssc:399501"/>
<dbReference type="CTD" id="150"/>
<dbReference type="VGNC" id="VGNC:85156">
    <property type="gene designation" value="ADRA2A"/>
</dbReference>
<dbReference type="eggNOG" id="KOG3656">
    <property type="taxonomic scope" value="Eukaryota"/>
</dbReference>
<dbReference type="GeneTree" id="ENSGT00940000161451"/>
<dbReference type="HOGENOM" id="CLU_009579_11_1_1"/>
<dbReference type="InParanoid" id="P18871"/>
<dbReference type="OMA" id="FFTYMLM"/>
<dbReference type="OrthoDB" id="5975661at2759"/>
<dbReference type="TreeFam" id="TF316350"/>
<dbReference type="Reactome" id="R-SSC-390696">
    <property type="pathway name" value="Adrenoceptors"/>
</dbReference>
<dbReference type="Reactome" id="R-SSC-392023">
    <property type="pathway name" value="Adrenaline signalling through Alpha-2 adrenergic receptor"/>
</dbReference>
<dbReference type="Reactome" id="R-SSC-400042">
    <property type="pathway name" value="Adrenaline,noradrenaline inhibits insulin secretion"/>
</dbReference>
<dbReference type="Reactome" id="R-SSC-418594">
    <property type="pathway name" value="G alpha (i) signalling events"/>
</dbReference>
<dbReference type="Reactome" id="R-SSC-418597">
    <property type="pathway name" value="G alpha (z) signalling events"/>
</dbReference>
<dbReference type="Reactome" id="R-SSC-5683826">
    <property type="pathway name" value="Surfactant metabolism"/>
</dbReference>
<dbReference type="SABIO-RK" id="P18871"/>
<dbReference type="Proteomes" id="UP000008227">
    <property type="component" value="Chromosome 14"/>
</dbReference>
<dbReference type="Proteomes" id="UP000314985">
    <property type="component" value="Chromosome 14"/>
</dbReference>
<dbReference type="Proteomes" id="UP000694570">
    <property type="component" value="Unplaced"/>
</dbReference>
<dbReference type="Proteomes" id="UP000694571">
    <property type="component" value="Unplaced"/>
</dbReference>
<dbReference type="Proteomes" id="UP000694720">
    <property type="component" value="Unplaced"/>
</dbReference>
<dbReference type="Proteomes" id="UP000694722">
    <property type="component" value="Unplaced"/>
</dbReference>
<dbReference type="Proteomes" id="UP000694723">
    <property type="component" value="Unplaced"/>
</dbReference>
<dbReference type="Proteomes" id="UP000694724">
    <property type="component" value="Unplaced"/>
</dbReference>
<dbReference type="Proteomes" id="UP000694725">
    <property type="component" value="Unplaced"/>
</dbReference>
<dbReference type="Proteomes" id="UP000694726">
    <property type="component" value="Unplaced"/>
</dbReference>
<dbReference type="Proteomes" id="UP000694727">
    <property type="component" value="Unplaced"/>
</dbReference>
<dbReference type="Proteomes" id="UP000694728">
    <property type="component" value="Unplaced"/>
</dbReference>
<dbReference type="Bgee" id="ENSSSCG00000010629">
    <property type="expression patterns" value="Expressed in uterus and 30 other cell types or tissues"/>
</dbReference>
<dbReference type="ExpressionAtlas" id="P18871">
    <property type="expression patterns" value="baseline and differential"/>
</dbReference>
<dbReference type="GO" id="GO:0005737">
    <property type="term" value="C:cytoplasm"/>
    <property type="evidence" value="ECO:0007669"/>
    <property type="project" value="Ensembl"/>
</dbReference>
<dbReference type="GO" id="GO:0098691">
    <property type="term" value="C:dopaminergic synapse"/>
    <property type="evidence" value="ECO:0007669"/>
    <property type="project" value="Ensembl"/>
</dbReference>
<dbReference type="GO" id="GO:0005886">
    <property type="term" value="C:plasma membrane"/>
    <property type="evidence" value="ECO:0000314"/>
    <property type="project" value="BHF-UCL"/>
</dbReference>
<dbReference type="GO" id="GO:0098793">
    <property type="term" value="C:presynapse"/>
    <property type="evidence" value="ECO:0007669"/>
    <property type="project" value="GOC"/>
</dbReference>
<dbReference type="GO" id="GO:0043235">
    <property type="term" value="C:receptor complex"/>
    <property type="evidence" value="ECO:0007669"/>
    <property type="project" value="Ensembl"/>
</dbReference>
<dbReference type="GO" id="GO:0031692">
    <property type="term" value="F:alpha-1B adrenergic receptor binding"/>
    <property type="evidence" value="ECO:0000353"/>
    <property type="project" value="BHF-UCL"/>
</dbReference>
<dbReference type="GO" id="GO:0031696">
    <property type="term" value="F:alpha-2C adrenergic receptor binding"/>
    <property type="evidence" value="ECO:0007669"/>
    <property type="project" value="Ensembl"/>
</dbReference>
<dbReference type="GO" id="GO:0004938">
    <property type="term" value="F:alpha2-adrenergic receptor activity"/>
    <property type="evidence" value="ECO:0000314"/>
    <property type="project" value="BHF-UCL"/>
</dbReference>
<dbReference type="GO" id="GO:0051379">
    <property type="term" value="F:epinephrine binding"/>
    <property type="evidence" value="ECO:0000314"/>
    <property type="project" value="BHF-UCL"/>
</dbReference>
<dbReference type="GO" id="GO:0032795">
    <property type="term" value="F:heterotrimeric G-protein binding"/>
    <property type="evidence" value="ECO:0007669"/>
    <property type="project" value="Ensembl"/>
</dbReference>
<dbReference type="GO" id="GO:0051380">
    <property type="term" value="F:norepinephrine binding"/>
    <property type="evidence" value="ECO:0007669"/>
    <property type="project" value="Ensembl"/>
</dbReference>
<dbReference type="GO" id="GO:0046982">
    <property type="term" value="F:protein heterodimerization activity"/>
    <property type="evidence" value="ECO:0000353"/>
    <property type="project" value="BHF-UCL"/>
</dbReference>
<dbReference type="GO" id="GO:0042803">
    <property type="term" value="F:protein homodimerization activity"/>
    <property type="evidence" value="ECO:0007669"/>
    <property type="project" value="Ensembl"/>
</dbReference>
<dbReference type="GO" id="GO:0019901">
    <property type="term" value="F:protein kinase binding"/>
    <property type="evidence" value="ECO:0007669"/>
    <property type="project" value="Ensembl"/>
</dbReference>
<dbReference type="GO" id="GO:0031996">
    <property type="term" value="F:thioesterase binding"/>
    <property type="evidence" value="ECO:0007669"/>
    <property type="project" value="Ensembl"/>
</dbReference>
<dbReference type="GO" id="GO:0071880">
    <property type="term" value="P:adenylate cyclase-activating adrenergic receptor signaling pathway"/>
    <property type="evidence" value="ECO:0000314"/>
    <property type="project" value="BHF-UCL"/>
</dbReference>
<dbReference type="GO" id="GO:0007189">
    <property type="term" value="P:adenylate cyclase-activating G protein-coupled receptor signaling pathway"/>
    <property type="evidence" value="ECO:0000314"/>
    <property type="project" value="BHF-UCL"/>
</dbReference>
<dbReference type="GO" id="GO:0071881">
    <property type="term" value="P:adenylate cyclase-inhibiting adrenergic receptor signaling pathway"/>
    <property type="evidence" value="ECO:0007669"/>
    <property type="project" value="Ensembl"/>
</dbReference>
<dbReference type="GO" id="GO:0007193">
    <property type="term" value="P:adenylate cyclase-inhibiting G protein-coupled receptor signaling pathway"/>
    <property type="evidence" value="ECO:0000314"/>
    <property type="project" value="BHF-UCL"/>
</dbReference>
<dbReference type="GO" id="GO:0032870">
    <property type="term" value="P:cellular response to hormone stimulus"/>
    <property type="evidence" value="ECO:0007669"/>
    <property type="project" value="Ensembl"/>
</dbReference>
<dbReference type="GO" id="GO:0042596">
    <property type="term" value="P:fear response"/>
    <property type="evidence" value="ECO:0007669"/>
    <property type="project" value="Ensembl"/>
</dbReference>
<dbReference type="GO" id="GO:0042593">
    <property type="term" value="P:glucose homeostasis"/>
    <property type="evidence" value="ECO:0007669"/>
    <property type="project" value="Ensembl"/>
</dbReference>
<dbReference type="GO" id="GO:0051926">
    <property type="term" value="P:negative regulation of calcium ion transport"/>
    <property type="evidence" value="ECO:0000314"/>
    <property type="project" value="BHF-UCL"/>
</dbReference>
<dbReference type="GO" id="GO:0061179">
    <property type="term" value="P:negative regulation of insulin secretion involved in cellular response to glucose stimulus"/>
    <property type="evidence" value="ECO:0007669"/>
    <property type="project" value="Ensembl"/>
</dbReference>
<dbReference type="GO" id="GO:0050995">
    <property type="term" value="P:negative regulation of lipid catabolic process"/>
    <property type="evidence" value="ECO:0007669"/>
    <property type="project" value="Ensembl"/>
</dbReference>
<dbReference type="GO" id="GO:0071882">
    <property type="term" value="P:phospholipase C-activating adrenergic receptor signaling pathway"/>
    <property type="evidence" value="ECO:0007669"/>
    <property type="project" value="Ensembl"/>
</dbReference>
<dbReference type="GO" id="GO:0030168">
    <property type="term" value="P:platelet activation"/>
    <property type="evidence" value="ECO:0007669"/>
    <property type="project" value="InterPro"/>
</dbReference>
<dbReference type="GO" id="GO:0030335">
    <property type="term" value="P:positive regulation of cell migration"/>
    <property type="evidence" value="ECO:0007669"/>
    <property type="project" value="Ensembl"/>
</dbReference>
<dbReference type="GO" id="GO:0001819">
    <property type="term" value="P:positive regulation of cytokine production"/>
    <property type="evidence" value="ECO:0007669"/>
    <property type="project" value="Ensembl"/>
</dbReference>
<dbReference type="GO" id="GO:0045742">
    <property type="term" value="P:positive regulation of epidermal growth factor receptor signaling pathway"/>
    <property type="evidence" value="ECO:0007669"/>
    <property type="project" value="Ensembl"/>
</dbReference>
<dbReference type="GO" id="GO:0043410">
    <property type="term" value="P:positive regulation of MAPK cascade"/>
    <property type="evidence" value="ECO:0007669"/>
    <property type="project" value="Ensembl"/>
</dbReference>
<dbReference type="GO" id="GO:0051044">
    <property type="term" value="P:positive regulation of membrane protein ectodomain proteolysis"/>
    <property type="evidence" value="ECO:0007669"/>
    <property type="project" value="Ensembl"/>
</dbReference>
<dbReference type="GO" id="GO:0051897">
    <property type="term" value="P:positive regulation of phosphatidylinositol 3-kinase/protein kinase B signal transduction"/>
    <property type="evidence" value="ECO:0007669"/>
    <property type="project" value="Ensembl"/>
</dbReference>
<dbReference type="GO" id="GO:0043268">
    <property type="term" value="P:positive regulation of potassium ion transport"/>
    <property type="evidence" value="ECO:0000314"/>
    <property type="project" value="BHF-UCL"/>
</dbReference>
<dbReference type="GO" id="GO:0090303">
    <property type="term" value="P:positive regulation of wound healing"/>
    <property type="evidence" value="ECO:0007669"/>
    <property type="project" value="Ensembl"/>
</dbReference>
<dbReference type="GO" id="GO:0099171">
    <property type="term" value="P:presynaptic modulation of chemical synaptic transmission"/>
    <property type="evidence" value="ECO:0007669"/>
    <property type="project" value="Ensembl"/>
</dbReference>
<dbReference type="GO" id="GO:0006940">
    <property type="term" value="P:regulation of smooth muscle contraction"/>
    <property type="evidence" value="ECO:0007669"/>
    <property type="project" value="InterPro"/>
</dbReference>
<dbReference type="GO" id="GO:0019229">
    <property type="term" value="P:regulation of vasoconstriction"/>
    <property type="evidence" value="ECO:0007669"/>
    <property type="project" value="InterPro"/>
</dbReference>
<dbReference type="CDD" id="cd15322">
    <property type="entry name" value="7tmA_alpha2A_AR"/>
    <property type="match status" value="1"/>
</dbReference>
<dbReference type="Gene3D" id="1.20.1070.10">
    <property type="entry name" value="Rhodopsin 7-helix transmembrane proteins"/>
    <property type="match status" value="1"/>
</dbReference>
<dbReference type="InterPro" id="IPR002233">
    <property type="entry name" value="ADR_fam"/>
</dbReference>
<dbReference type="InterPro" id="IPR001946">
    <property type="entry name" value="ADRA2A_rcpt"/>
</dbReference>
<dbReference type="InterPro" id="IPR000276">
    <property type="entry name" value="GPCR_Rhodpsn"/>
</dbReference>
<dbReference type="InterPro" id="IPR017452">
    <property type="entry name" value="GPCR_Rhodpsn_7TM"/>
</dbReference>
<dbReference type="PANTHER" id="PTHR24248">
    <property type="entry name" value="ADRENERGIC RECEPTOR-RELATED G-PROTEIN COUPLED RECEPTOR"/>
    <property type="match status" value="1"/>
</dbReference>
<dbReference type="PANTHER" id="PTHR24248:SF24">
    <property type="entry name" value="ALPHA-2A ADRENERGIC RECEPTOR"/>
    <property type="match status" value="1"/>
</dbReference>
<dbReference type="Pfam" id="PF00001">
    <property type="entry name" value="7tm_1"/>
    <property type="match status" value="1"/>
</dbReference>
<dbReference type="PRINTS" id="PR01103">
    <property type="entry name" value="ADRENERGICR"/>
</dbReference>
<dbReference type="PRINTS" id="PR00558">
    <property type="entry name" value="ADRENRGCA2AR"/>
</dbReference>
<dbReference type="PRINTS" id="PR00237">
    <property type="entry name" value="GPCRRHODOPSN"/>
</dbReference>
<dbReference type="SMART" id="SM01381">
    <property type="entry name" value="7TM_GPCR_Srsx"/>
    <property type="match status" value="1"/>
</dbReference>
<dbReference type="SUPFAM" id="SSF81321">
    <property type="entry name" value="Family A G protein-coupled receptor-like"/>
    <property type="match status" value="1"/>
</dbReference>
<dbReference type="PROSITE" id="PS00237">
    <property type="entry name" value="G_PROTEIN_RECEP_F1_1"/>
    <property type="match status" value="1"/>
</dbReference>
<dbReference type="PROSITE" id="PS50262">
    <property type="entry name" value="G_PROTEIN_RECEP_F1_2"/>
    <property type="match status" value="1"/>
</dbReference>
<sequence length="465" mass="50666">MFRQEQPLAEGSFAPMGSLQPEAGNASWNGTEAPGGGARATPYSLQVTLTLVCLAGLLMLFTVFGNVLVIIAVFTSRALKAPQNLFLVSLASADILVATLVIPFSLANEVMGYWYFGKAWCEIYLALDVLFCTSSIVHLCAISLDRYWSITQAIEYNLKRTPRRIKAIIVTVWVISAVISFPPLISIEKKAGGGGQQPAEPRCEINDQKWYVISSCIGSFFAPCLIMILVYVRIYQIAKRRTRVPPSRRGPDAAAALPGGAERRPNGLGPERGVGRVGAEAEPLPVQLNGAPGEPAPAGPRDADGLDLEESSSSEHAERPPGPRRSERGPRAKSKARASQVKPGDSLPRRGPGAPGPGAPATGAGEERGGVAKASRWRGRQNREKRFTFVLAVVIGVFVVCWFPFFFTYTLTAVGCSVPPTLFKFFFWFGYCNSSLNPVIYTIFNHDFRRAFKKILCRGDRKRIV</sequence>
<feature type="chain" id="PRO_0000069082" description="Alpha-2A adrenergic receptor">
    <location>
        <begin position="1"/>
        <end position="465"/>
    </location>
</feature>
<feature type="topological domain" description="Extracellular" evidence="1">
    <location>
        <begin position="1"/>
        <end position="48"/>
    </location>
</feature>
<feature type="transmembrane region" description="Helical; Name=1" evidence="1">
    <location>
        <begin position="49"/>
        <end position="74"/>
    </location>
</feature>
<feature type="topological domain" description="Cytoplasmic" evidence="1">
    <location>
        <begin position="75"/>
        <end position="85"/>
    </location>
</feature>
<feature type="transmembrane region" description="Helical; Name=2" evidence="1">
    <location>
        <begin position="86"/>
        <end position="111"/>
    </location>
</feature>
<feature type="topological domain" description="Extracellular" evidence="1">
    <location>
        <begin position="112"/>
        <end position="121"/>
    </location>
</feature>
<feature type="transmembrane region" description="Helical; Name=3" evidence="1">
    <location>
        <begin position="122"/>
        <end position="144"/>
    </location>
</feature>
<feature type="topological domain" description="Cytoplasmic" evidence="1">
    <location>
        <begin position="145"/>
        <end position="164"/>
    </location>
</feature>
<feature type="transmembrane region" description="Helical; Name=4" evidence="1">
    <location>
        <begin position="165"/>
        <end position="188"/>
    </location>
</feature>
<feature type="topological domain" description="Extracellular" evidence="1">
    <location>
        <begin position="189"/>
        <end position="207"/>
    </location>
</feature>
<feature type="transmembrane region" description="Helical; Name=5" evidence="1">
    <location>
        <begin position="208"/>
        <end position="232"/>
    </location>
</feature>
<feature type="topological domain" description="Cytoplasmic" evidence="1">
    <location>
        <begin position="233"/>
        <end position="389"/>
    </location>
</feature>
<feature type="transmembrane region" description="Helical; Name=6" evidence="1">
    <location>
        <begin position="390"/>
        <end position="414"/>
    </location>
</feature>
<feature type="topological domain" description="Extracellular" evidence="1">
    <location>
        <begin position="415"/>
        <end position="424"/>
    </location>
</feature>
<feature type="transmembrane region" description="Helical; Name=7" evidence="1">
    <location>
        <begin position="425"/>
        <end position="445"/>
    </location>
</feature>
<feature type="topological domain" description="Cytoplasmic" evidence="1">
    <location>
        <begin position="446"/>
        <end position="465"/>
    </location>
</feature>
<feature type="region of interest" description="Disordered" evidence="7">
    <location>
        <begin position="242"/>
        <end position="377"/>
    </location>
</feature>
<feature type="compositionally biased region" description="Basic and acidic residues" evidence="7">
    <location>
        <begin position="313"/>
        <end position="330"/>
    </location>
</feature>
<feature type="site" description="Implicated in ligand binding" evidence="1">
    <location>
        <position position="128"/>
    </location>
</feature>
<feature type="site" description="Implicated in catechol agonist binding" evidence="1">
    <location>
        <position position="215"/>
    </location>
</feature>
<feature type="site" description="Implicated in catechol agonist binding" evidence="1">
    <location>
        <position position="219"/>
    </location>
</feature>
<feature type="modified residue" description="Phosphoserine" evidence="3">
    <location>
        <position position="346"/>
    </location>
</feature>
<feature type="modified residue" description="Omega-N-methylarginine" evidence="4">
    <location>
        <position position="368"/>
    </location>
</feature>
<feature type="lipid moiety-binding region" description="S-palmitoyl cysteine" evidence="8">
    <location>
        <position position="457"/>
    </location>
</feature>
<feature type="glycosylation site" description="N-linked (GlcNAc...) asparagine" evidence="5">
    <location>
        <position position="25"/>
    </location>
</feature>
<feature type="glycosylation site" description="N-linked (GlcNAc...) asparagine" evidence="5">
    <location>
        <position position="29"/>
    </location>
</feature>
<feature type="disulfide bond" evidence="6">
    <location>
        <begin position="121"/>
        <end position="203"/>
    </location>
</feature>
<feature type="mutagenesis site" description="Loss of palmitoylation." evidence="8">
    <original>C</original>
    <variation>A</variation>
    <variation>S</variation>
    <location>
        <position position="457"/>
    </location>
</feature>